<name>DTD_STAAN</name>
<reference key="1">
    <citation type="journal article" date="2001" name="Lancet">
        <title>Whole genome sequencing of meticillin-resistant Staphylococcus aureus.</title>
        <authorList>
            <person name="Kuroda M."/>
            <person name="Ohta T."/>
            <person name="Uchiyama I."/>
            <person name="Baba T."/>
            <person name="Yuzawa H."/>
            <person name="Kobayashi I."/>
            <person name="Cui L."/>
            <person name="Oguchi A."/>
            <person name="Aoki K."/>
            <person name="Nagai Y."/>
            <person name="Lian J.-Q."/>
            <person name="Ito T."/>
            <person name="Kanamori M."/>
            <person name="Matsumaru H."/>
            <person name="Maruyama A."/>
            <person name="Murakami H."/>
            <person name="Hosoyama A."/>
            <person name="Mizutani-Ui Y."/>
            <person name="Takahashi N.K."/>
            <person name="Sawano T."/>
            <person name="Inoue R."/>
            <person name="Kaito C."/>
            <person name="Sekimizu K."/>
            <person name="Hirakawa H."/>
            <person name="Kuhara S."/>
            <person name="Goto S."/>
            <person name="Yabuzaki J."/>
            <person name="Kanehisa M."/>
            <person name="Yamashita A."/>
            <person name="Oshima K."/>
            <person name="Furuya K."/>
            <person name="Yoshino C."/>
            <person name="Shiba T."/>
            <person name="Hattori M."/>
            <person name="Ogasawara N."/>
            <person name="Hayashi H."/>
            <person name="Hiramatsu K."/>
        </authorList>
    </citation>
    <scope>NUCLEOTIDE SEQUENCE [LARGE SCALE GENOMIC DNA]</scope>
    <source>
        <strain>N315</strain>
    </source>
</reference>
<reference key="2">
    <citation type="submission" date="2007-10" db="UniProtKB">
        <title>Shotgun proteomic analysis of total and membrane protein extracts of S. aureus strain N315.</title>
        <authorList>
            <person name="Vaezzadeh A.R."/>
            <person name="Deshusses J."/>
            <person name="Lescuyer P."/>
            <person name="Hochstrasser D.F."/>
        </authorList>
    </citation>
    <scope>IDENTIFICATION BY MASS SPECTROMETRY [LARGE SCALE ANALYSIS]</scope>
    <source>
        <strain>N315</strain>
    </source>
</reference>
<accession>P0A026</accession>
<accession>O32420</accession>
<sequence>MKVVVQRVKEASVTNDTLNNQIKKGYCLLVGIGQNSTEQDADVIAKKIANARLFEDDNNKLNFNIQQMNGEILSVSQFTLYADVKKGNRPGFSNSKNPDQAVKIYEYFNDALRAYGLTVKTGEFGTHMNVSINNDGPVTIIYESQDGKIQ</sequence>
<evidence type="ECO:0000255" key="1">
    <source>
        <dbReference type="HAMAP-Rule" id="MF_00518"/>
    </source>
</evidence>
<protein>
    <recommendedName>
        <fullName evidence="1">D-aminoacyl-tRNA deacylase</fullName>
        <shortName evidence="1">DTD</shortName>
        <ecNumber evidence="1">3.1.1.96</ecNumber>
    </recommendedName>
    <alternativeName>
        <fullName evidence="1">Gly-tRNA(Ala) deacylase</fullName>
    </alternativeName>
</protein>
<comment type="function">
    <text evidence="1">An aminoacyl-tRNA editing enzyme that deacylates mischarged D-aminoacyl-tRNAs. Also deacylates mischarged glycyl-tRNA(Ala), protecting cells against glycine mischarging by AlaRS. Acts via tRNA-based rather than protein-based catalysis; rejects L-amino acids rather than detecting D-amino acids in the active site. By recycling D-aminoacyl-tRNA to D-amino acids and free tRNA molecules, this enzyme counteracts the toxicity associated with the formation of D-aminoacyl-tRNA entities in vivo and helps enforce protein L-homochirality.</text>
</comment>
<comment type="catalytic activity">
    <reaction evidence="1">
        <text>glycyl-tRNA(Ala) + H2O = tRNA(Ala) + glycine + H(+)</text>
        <dbReference type="Rhea" id="RHEA:53744"/>
        <dbReference type="Rhea" id="RHEA-COMP:9657"/>
        <dbReference type="Rhea" id="RHEA-COMP:13640"/>
        <dbReference type="ChEBI" id="CHEBI:15377"/>
        <dbReference type="ChEBI" id="CHEBI:15378"/>
        <dbReference type="ChEBI" id="CHEBI:57305"/>
        <dbReference type="ChEBI" id="CHEBI:78442"/>
        <dbReference type="ChEBI" id="CHEBI:78522"/>
        <dbReference type="EC" id="3.1.1.96"/>
    </reaction>
</comment>
<comment type="catalytic activity">
    <reaction evidence="1">
        <text>a D-aminoacyl-tRNA + H2O = a tRNA + a D-alpha-amino acid + H(+)</text>
        <dbReference type="Rhea" id="RHEA:13953"/>
        <dbReference type="Rhea" id="RHEA-COMP:10123"/>
        <dbReference type="Rhea" id="RHEA-COMP:10124"/>
        <dbReference type="ChEBI" id="CHEBI:15377"/>
        <dbReference type="ChEBI" id="CHEBI:15378"/>
        <dbReference type="ChEBI" id="CHEBI:59871"/>
        <dbReference type="ChEBI" id="CHEBI:78442"/>
        <dbReference type="ChEBI" id="CHEBI:79333"/>
        <dbReference type="EC" id="3.1.1.96"/>
    </reaction>
</comment>
<comment type="subunit">
    <text evidence="1">Homodimer.</text>
</comment>
<comment type="subcellular location">
    <subcellularLocation>
        <location evidence="1">Cytoplasm</location>
    </subcellularLocation>
</comment>
<comment type="domain">
    <text evidence="1">A Gly-cisPro motif from one monomer fits into the active site of the other monomer to allow specific chiral rejection of L-amino acids.</text>
</comment>
<comment type="similarity">
    <text evidence="1">Belongs to the DTD family.</text>
</comment>
<organism>
    <name type="scientific">Staphylococcus aureus (strain N315)</name>
    <dbReference type="NCBI Taxonomy" id="158879"/>
    <lineage>
        <taxon>Bacteria</taxon>
        <taxon>Bacillati</taxon>
        <taxon>Bacillota</taxon>
        <taxon>Bacilli</taxon>
        <taxon>Bacillales</taxon>
        <taxon>Staphylococcaceae</taxon>
        <taxon>Staphylococcus</taxon>
    </lineage>
</organism>
<keyword id="KW-0963">Cytoplasm</keyword>
<keyword id="KW-0378">Hydrolase</keyword>
<keyword id="KW-0694">RNA-binding</keyword>
<keyword id="KW-0820">tRNA-binding</keyword>
<proteinExistence type="evidence at protein level"/>
<gene>
    <name evidence="1" type="primary">dtd</name>
    <name type="ordered locus">SA1459</name>
</gene>
<dbReference type="EC" id="3.1.1.96" evidence="1"/>
<dbReference type="EMBL" id="BA000018">
    <property type="protein sequence ID" value="BAB42725.1"/>
    <property type="molecule type" value="Genomic_DNA"/>
</dbReference>
<dbReference type="PIR" id="H89945">
    <property type="entry name" value="H89945"/>
</dbReference>
<dbReference type="RefSeq" id="WP_000869983.1">
    <property type="nucleotide sequence ID" value="NC_002745.2"/>
</dbReference>
<dbReference type="SMR" id="P0A026"/>
<dbReference type="EnsemblBacteria" id="BAB42725">
    <property type="protein sequence ID" value="BAB42725"/>
    <property type="gene ID" value="BAB42725"/>
</dbReference>
<dbReference type="KEGG" id="sau:SA1459"/>
<dbReference type="HOGENOM" id="CLU_076901_1_0_9"/>
<dbReference type="GO" id="GO:0005737">
    <property type="term" value="C:cytoplasm"/>
    <property type="evidence" value="ECO:0007669"/>
    <property type="project" value="UniProtKB-SubCell"/>
</dbReference>
<dbReference type="GO" id="GO:0051500">
    <property type="term" value="F:D-tyrosyl-tRNA(Tyr) deacylase activity"/>
    <property type="evidence" value="ECO:0007669"/>
    <property type="project" value="TreeGrafter"/>
</dbReference>
<dbReference type="GO" id="GO:0106026">
    <property type="term" value="F:Gly-tRNA(Ala) deacylase activity"/>
    <property type="evidence" value="ECO:0007669"/>
    <property type="project" value="UniProtKB-UniRule"/>
</dbReference>
<dbReference type="GO" id="GO:0043908">
    <property type="term" value="F:Ser(Gly)-tRNA(Ala) hydrolase activity"/>
    <property type="evidence" value="ECO:0007669"/>
    <property type="project" value="UniProtKB-UniRule"/>
</dbReference>
<dbReference type="GO" id="GO:0000049">
    <property type="term" value="F:tRNA binding"/>
    <property type="evidence" value="ECO:0007669"/>
    <property type="project" value="UniProtKB-UniRule"/>
</dbReference>
<dbReference type="GO" id="GO:0019478">
    <property type="term" value="P:D-amino acid catabolic process"/>
    <property type="evidence" value="ECO:0007669"/>
    <property type="project" value="UniProtKB-UniRule"/>
</dbReference>
<dbReference type="FunFam" id="3.50.80.10:FF:000005">
    <property type="entry name" value="D-aminoacyl-tRNA deacylase"/>
    <property type="match status" value="1"/>
</dbReference>
<dbReference type="Gene3D" id="3.50.80.10">
    <property type="entry name" value="D-tyrosyl-tRNA(Tyr) deacylase"/>
    <property type="match status" value="1"/>
</dbReference>
<dbReference type="HAMAP" id="MF_00518">
    <property type="entry name" value="Deacylase_Dtd"/>
    <property type="match status" value="1"/>
</dbReference>
<dbReference type="InterPro" id="IPR003732">
    <property type="entry name" value="Daa-tRNA_deacyls_DTD"/>
</dbReference>
<dbReference type="InterPro" id="IPR023509">
    <property type="entry name" value="DTD-like_sf"/>
</dbReference>
<dbReference type="NCBIfam" id="TIGR00256">
    <property type="entry name" value="D-aminoacyl-tRNA deacylase"/>
    <property type="match status" value="1"/>
</dbReference>
<dbReference type="PANTHER" id="PTHR10472:SF5">
    <property type="entry name" value="D-AMINOACYL-TRNA DEACYLASE 1"/>
    <property type="match status" value="1"/>
</dbReference>
<dbReference type="PANTHER" id="PTHR10472">
    <property type="entry name" value="D-TYROSYL-TRNA TYR DEACYLASE"/>
    <property type="match status" value="1"/>
</dbReference>
<dbReference type="Pfam" id="PF02580">
    <property type="entry name" value="Tyr_Deacylase"/>
    <property type="match status" value="1"/>
</dbReference>
<dbReference type="SUPFAM" id="SSF69500">
    <property type="entry name" value="DTD-like"/>
    <property type="match status" value="1"/>
</dbReference>
<feature type="chain" id="PRO_0000164588" description="D-aminoacyl-tRNA deacylase">
    <location>
        <begin position="1"/>
        <end position="150"/>
    </location>
</feature>
<feature type="short sequence motif" description="Gly-cisPro motif, important for rejection of L-amino acids" evidence="1">
    <location>
        <begin position="136"/>
        <end position="137"/>
    </location>
</feature>